<feature type="chain" id="PRO_0000229298" description="Bifunctional methyltransferase">
    <location>
        <begin position="1"/>
        <end position="527"/>
    </location>
</feature>
<feature type="region of interest" description="RF MTase">
    <location>
        <begin position="1"/>
        <end position="311"/>
    </location>
</feature>
<feature type="region of interest" description="HemK">
    <location>
        <begin position="1"/>
        <end position="309"/>
    </location>
</feature>
<feature type="region of interest" description="tRNA (guanine-N(7)-)-methyltransferase">
    <location>
        <begin position="310"/>
        <end position="527"/>
    </location>
</feature>
<feature type="region of interest" description="tRNA MTase">
    <location>
        <begin position="314"/>
        <end position="527"/>
    </location>
</feature>
<feature type="active site" evidence="1">
    <location>
        <position position="430"/>
    </location>
</feature>
<feature type="binding site" evidence="1">
    <location>
        <begin position="149"/>
        <end position="153"/>
    </location>
    <ligand>
        <name>S-adenosyl-L-methionine</name>
        <dbReference type="ChEBI" id="CHEBI:59789"/>
    </ligand>
</feature>
<feature type="binding site" evidence="1">
    <location>
        <position position="172"/>
    </location>
    <ligand>
        <name>S-adenosyl-L-methionine</name>
        <dbReference type="ChEBI" id="CHEBI:59789"/>
    </ligand>
</feature>
<feature type="binding site" evidence="1">
    <location>
        <position position="201"/>
    </location>
    <ligand>
        <name>S-adenosyl-L-methionine</name>
        <dbReference type="ChEBI" id="CHEBI:59789"/>
    </ligand>
</feature>
<feature type="binding site" evidence="1">
    <location>
        <begin position="216"/>
        <end position="219"/>
    </location>
    <ligand>
        <name>substrate</name>
    </ligand>
</feature>
<feature type="binding site" evidence="1">
    <location>
        <position position="216"/>
    </location>
    <ligand>
        <name>S-adenosyl-L-methionine</name>
        <dbReference type="ChEBI" id="CHEBI:59789"/>
    </ligand>
</feature>
<feature type="binding site" evidence="1">
    <location>
        <position position="356"/>
    </location>
    <ligand>
        <name>S-adenosyl-L-methionine</name>
        <dbReference type="ChEBI" id="CHEBI:59789"/>
    </ligand>
</feature>
<feature type="binding site" evidence="1">
    <location>
        <position position="381"/>
    </location>
    <ligand>
        <name>S-adenosyl-L-methionine</name>
        <dbReference type="ChEBI" id="CHEBI:59789"/>
    </ligand>
</feature>
<feature type="binding site" evidence="1">
    <location>
        <position position="408"/>
    </location>
    <ligand>
        <name>S-adenosyl-L-methionine</name>
        <dbReference type="ChEBI" id="CHEBI:59789"/>
    </ligand>
</feature>
<feature type="binding site" evidence="1">
    <location>
        <position position="430"/>
    </location>
    <ligand>
        <name>S-adenosyl-L-methionine</name>
        <dbReference type="ChEBI" id="CHEBI:59789"/>
    </ligand>
</feature>
<feature type="binding site" evidence="1">
    <location>
        <position position="434"/>
    </location>
    <ligand>
        <name>substrate</name>
    </ligand>
</feature>
<feature type="binding site" evidence="1">
    <location>
        <position position="466"/>
    </location>
    <ligand>
        <name>substrate</name>
    </ligand>
</feature>
<protein>
    <recommendedName>
        <fullName>Bifunctional methyltransferase</fullName>
    </recommendedName>
    <domain>
        <recommendedName>
            <fullName>Release factor glutamine methyltransferase</fullName>
            <shortName>RF MTase</shortName>
            <ecNumber>2.1.1.297</ecNumber>
        </recommendedName>
        <alternativeName>
            <fullName>N5-glutamine methyltransferase PrmC</fullName>
        </alternativeName>
        <alternativeName>
            <fullName>Protein-(glutamine-N5) MTase PrmC</fullName>
        </alternativeName>
        <alternativeName>
            <fullName>Protein-glutamine N-methyltransferase PrmC</fullName>
        </alternativeName>
    </domain>
    <domain>
        <recommendedName>
            <fullName>tRNA (guanine-N(7)-)-methyltransferase</fullName>
            <ecNumber>2.1.1.33</ecNumber>
        </recommendedName>
        <alternativeName>
            <fullName>tRNA (guanine(46)-N(7))-methyltransferase</fullName>
        </alternativeName>
        <alternativeName>
            <fullName>tRNA(m7G46)-methyltransferase</fullName>
        </alternativeName>
    </domain>
</protein>
<comment type="function">
    <text evidence="1">Methylates the class 1 translation termination release factors RF1/PrfA and RF2/PrfB on the glutamine residue of the universally conserved GGQ motif.</text>
</comment>
<comment type="function">
    <text evidence="1">Catalyzes the formation of N(7)-methylguanine at position 46 (m7G46) in tRNA.</text>
</comment>
<comment type="catalytic activity">
    <reaction>
        <text>L-glutaminyl-[peptide chain release factor] + S-adenosyl-L-methionine = N(5)-methyl-L-glutaminyl-[peptide chain release factor] + S-adenosyl-L-homocysteine + H(+)</text>
        <dbReference type="Rhea" id="RHEA:42896"/>
        <dbReference type="Rhea" id="RHEA-COMP:10271"/>
        <dbReference type="Rhea" id="RHEA-COMP:10272"/>
        <dbReference type="ChEBI" id="CHEBI:15378"/>
        <dbReference type="ChEBI" id="CHEBI:30011"/>
        <dbReference type="ChEBI" id="CHEBI:57856"/>
        <dbReference type="ChEBI" id="CHEBI:59789"/>
        <dbReference type="ChEBI" id="CHEBI:61891"/>
        <dbReference type="EC" id="2.1.1.297"/>
    </reaction>
</comment>
<comment type="catalytic activity">
    <reaction>
        <text>guanosine(46) in tRNA + S-adenosyl-L-methionine = N(7)-methylguanosine(46) in tRNA + S-adenosyl-L-homocysteine</text>
        <dbReference type="Rhea" id="RHEA:42708"/>
        <dbReference type="Rhea" id="RHEA-COMP:10188"/>
        <dbReference type="Rhea" id="RHEA-COMP:10189"/>
        <dbReference type="ChEBI" id="CHEBI:57856"/>
        <dbReference type="ChEBI" id="CHEBI:59789"/>
        <dbReference type="ChEBI" id="CHEBI:74269"/>
        <dbReference type="ChEBI" id="CHEBI:74480"/>
        <dbReference type="EC" id="2.1.1.33"/>
    </reaction>
</comment>
<comment type="similarity">
    <text evidence="2">In the C-terminal section; belongs to the class I-like SAM-binding methyltransferase superfamily. TrmB family.</text>
</comment>
<comment type="similarity">
    <text evidence="2">In the N-terminal section; belongs to the protein N5-glutamine methyltransferase family. PrmC subfamily.</text>
</comment>
<keyword id="KW-0489">Methyltransferase</keyword>
<keyword id="KW-0949">S-adenosyl-L-methionine</keyword>
<keyword id="KW-0808">Transferase</keyword>
<keyword id="KW-0819">tRNA processing</keyword>
<name>RFTRM_RICFE</name>
<gene>
    <name type="primary">prmC/trmB</name>
    <name type="synonym">hemK</name>
    <name type="ordered locus">RF_1344</name>
</gene>
<proteinExistence type="inferred from homology"/>
<accession>Q4UJU4</accession>
<sequence length="527" mass="60400">MQYSIKQVLSKASDKLNKIGISSSQLEARILLRYVINKPIEYLLINLDEQLNEVEIEAFEKLLERRLKHEPIAYIIGIKEFYSREFIVNKHVLIPRADTEVLVDVCVHKSSLRATKRSVAISGILSKIASSTPMASSRNDEYTKILELGTGSGCIAISLLCELPNARVVATDISLDAIEVARNNALKYHVTDRIQIIHSNWFENLGKQKFDVIVSNPPYISTDEKPEMALETLNHEPYIALFAEEDGLQAYRIIAENAKKFLKPNGKIVLEIGFKQEEAVTQIFLSNGYNIESVYKDLQGHSRVILFSPINLNRSYARRIGKSLSGLQQNLLDNELPKYLFSKEKLIDEKRKIFLEIGFGMGEHFINQAKMNPDALFIGVEVYLNGVANVLKLASEQNITNFLLFPNNLDFILNDLPNNSLDGIYILFPDPWIKNKQKKKRIFNKERLKILQDKLKDNGNLVFASDIENYFYEAIELIEQNSNFKIMNKNNYLKPHDNYVITKYHQKAIKANRIPRFIILQHVSGDH</sequence>
<reference key="1">
    <citation type="journal article" date="2005" name="PLoS Biol.">
        <title>The genome sequence of Rickettsia felis identifies the first putative conjugative plasmid in an obligate intracellular parasite.</title>
        <authorList>
            <person name="Ogata H."/>
            <person name="Renesto P."/>
            <person name="Audic S."/>
            <person name="Robert C."/>
            <person name="Blanc G."/>
            <person name="Fournier P.-E."/>
            <person name="Parinello H."/>
            <person name="Claverie J.-M."/>
            <person name="Raoult D."/>
        </authorList>
    </citation>
    <scope>NUCLEOTIDE SEQUENCE [LARGE SCALE GENOMIC DNA]</scope>
    <source>
        <strain>ATCC VR-1525 / URRWXCal2</strain>
    </source>
</reference>
<evidence type="ECO:0000250" key="1"/>
<evidence type="ECO:0000305" key="2"/>
<dbReference type="EC" id="2.1.1.297"/>
<dbReference type="EC" id="2.1.1.33"/>
<dbReference type="EMBL" id="CP000053">
    <property type="protein sequence ID" value="AAY62195.1"/>
    <property type="molecule type" value="Genomic_DNA"/>
</dbReference>
<dbReference type="SMR" id="Q4UJU4"/>
<dbReference type="STRING" id="315456.RF_1344"/>
<dbReference type="KEGG" id="rfe:RF_1344"/>
<dbReference type="eggNOG" id="COG0220">
    <property type="taxonomic scope" value="Bacteria"/>
</dbReference>
<dbReference type="eggNOG" id="COG2890">
    <property type="taxonomic scope" value="Bacteria"/>
</dbReference>
<dbReference type="HOGENOM" id="CLU_018398_3_3_5"/>
<dbReference type="OrthoDB" id="9800643at2"/>
<dbReference type="Proteomes" id="UP000008548">
    <property type="component" value="Chromosome"/>
</dbReference>
<dbReference type="GO" id="GO:0003676">
    <property type="term" value="F:nucleic acid binding"/>
    <property type="evidence" value="ECO:0007669"/>
    <property type="project" value="InterPro"/>
</dbReference>
<dbReference type="GO" id="GO:0102559">
    <property type="term" value="F:protein-(glutamine-N5) methyltransferase activity"/>
    <property type="evidence" value="ECO:0007669"/>
    <property type="project" value="UniProtKB-EC"/>
</dbReference>
<dbReference type="GO" id="GO:0036009">
    <property type="term" value="F:protein-glutamine N-methyltransferase activity"/>
    <property type="evidence" value="ECO:0007669"/>
    <property type="project" value="UniProtKB-UniRule"/>
</dbReference>
<dbReference type="GO" id="GO:0008176">
    <property type="term" value="F:tRNA (guanine(46)-N7)-methyltransferase activity"/>
    <property type="evidence" value="ECO:0007669"/>
    <property type="project" value="UniProtKB-UniRule"/>
</dbReference>
<dbReference type="CDD" id="cd02440">
    <property type="entry name" value="AdoMet_MTases"/>
    <property type="match status" value="1"/>
</dbReference>
<dbReference type="Gene3D" id="1.10.8.10">
    <property type="entry name" value="DNA helicase RuvA subunit, C-terminal domain"/>
    <property type="match status" value="1"/>
</dbReference>
<dbReference type="Gene3D" id="3.40.50.150">
    <property type="entry name" value="Vaccinia Virus protein VP39"/>
    <property type="match status" value="2"/>
</dbReference>
<dbReference type="HAMAP" id="MF_02126">
    <property type="entry name" value="RF_methyltr_PrmC"/>
    <property type="match status" value="1"/>
</dbReference>
<dbReference type="HAMAP" id="MF_01057">
    <property type="entry name" value="tRNA_methyltr_TrmB"/>
    <property type="match status" value="1"/>
</dbReference>
<dbReference type="InterPro" id="IPR002052">
    <property type="entry name" value="DNA_methylase_N6_adenine_CS"/>
</dbReference>
<dbReference type="InterPro" id="IPR004556">
    <property type="entry name" value="HemK-like"/>
</dbReference>
<dbReference type="InterPro" id="IPR050320">
    <property type="entry name" value="N5-glutamine_MTase"/>
</dbReference>
<dbReference type="InterPro" id="IPR040758">
    <property type="entry name" value="PrmC_N"/>
</dbReference>
<dbReference type="InterPro" id="IPR019874">
    <property type="entry name" value="RF_methyltr_PrmC"/>
</dbReference>
<dbReference type="InterPro" id="IPR029063">
    <property type="entry name" value="SAM-dependent_MTases_sf"/>
</dbReference>
<dbReference type="InterPro" id="IPR007848">
    <property type="entry name" value="Small_mtfrase_dom"/>
</dbReference>
<dbReference type="InterPro" id="IPR003358">
    <property type="entry name" value="tRNA_(Gua-N-7)_MeTrfase_Trmb"/>
</dbReference>
<dbReference type="InterPro" id="IPR055361">
    <property type="entry name" value="tRNA_methyltr_TrmB_bact"/>
</dbReference>
<dbReference type="NCBIfam" id="TIGR00536">
    <property type="entry name" value="hemK_fam"/>
    <property type="match status" value="1"/>
</dbReference>
<dbReference type="NCBIfam" id="NF002421">
    <property type="entry name" value="PRK01544.1"/>
    <property type="match status" value="1"/>
</dbReference>
<dbReference type="NCBIfam" id="TIGR03534">
    <property type="entry name" value="RF_mod_PrmC"/>
    <property type="match status" value="1"/>
</dbReference>
<dbReference type="NCBIfam" id="TIGR00091">
    <property type="entry name" value="tRNA (guanosine(46)-N7)-methyltransferase TrmB"/>
    <property type="match status" value="1"/>
</dbReference>
<dbReference type="PANTHER" id="PTHR18895">
    <property type="entry name" value="HEMK METHYLTRANSFERASE"/>
    <property type="match status" value="1"/>
</dbReference>
<dbReference type="PANTHER" id="PTHR18895:SF74">
    <property type="entry name" value="MTRF1L RELEASE FACTOR GLUTAMINE METHYLTRANSFERASE"/>
    <property type="match status" value="1"/>
</dbReference>
<dbReference type="Pfam" id="PF02390">
    <property type="entry name" value="Methyltransf_4"/>
    <property type="match status" value="1"/>
</dbReference>
<dbReference type="Pfam" id="PF05175">
    <property type="entry name" value="MTS"/>
    <property type="match status" value="1"/>
</dbReference>
<dbReference type="Pfam" id="PF17827">
    <property type="entry name" value="PrmC_N"/>
    <property type="match status" value="1"/>
</dbReference>
<dbReference type="SUPFAM" id="SSF53335">
    <property type="entry name" value="S-adenosyl-L-methionine-dependent methyltransferases"/>
    <property type="match status" value="2"/>
</dbReference>
<dbReference type="PROSITE" id="PS51625">
    <property type="entry name" value="SAM_MT_TRMB"/>
    <property type="match status" value="1"/>
</dbReference>
<organism>
    <name type="scientific">Rickettsia felis (strain ATCC VR-1525 / URRWXCal2)</name>
    <name type="common">Rickettsia azadi</name>
    <dbReference type="NCBI Taxonomy" id="315456"/>
    <lineage>
        <taxon>Bacteria</taxon>
        <taxon>Pseudomonadati</taxon>
        <taxon>Pseudomonadota</taxon>
        <taxon>Alphaproteobacteria</taxon>
        <taxon>Rickettsiales</taxon>
        <taxon>Rickettsiaceae</taxon>
        <taxon>Rickettsieae</taxon>
        <taxon>Rickettsia</taxon>
        <taxon>spotted fever group</taxon>
    </lineage>
</organism>